<accession>C6DCC8</accession>
<reference key="1">
    <citation type="submission" date="2009-07" db="EMBL/GenBank/DDBJ databases">
        <title>Complete sequence of Pectobacterium carotovorum subsp. carotovorum PC1.</title>
        <authorList>
            <consortium name="US DOE Joint Genome Institute"/>
            <person name="Lucas S."/>
            <person name="Copeland A."/>
            <person name="Lapidus A."/>
            <person name="Glavina del Rio T."/>
            <person name="Tice H."/>
            <person name="Bruce D."/>
            <person name="Goodwin L."/>
            <person name="Pitluck S."/>
            <person name="Munk A.C."/>
            <person name="Brettin T."/>
            <person name="Detter J.C."/>
            <person name="Han C."/>
            <person name="Tapia R."/>
            <person name="Larimer F."/>
            <person name="Land M."/>
            <person name="Hauser L."/>
            <person name="Kyrpides N."/>
            <person name="Mikhailova N."/>
            <person name="Balakrishnan V."/>
            <person name="Glasner J."/>
            <person name="Perna N.T."/>
        </authorList>
    </citation>
    <scope>NUCLEOTIDE SEQUENCE [LARGE SCALE GENOMIC DNA]</scope>
    <source>
        <strain>PC1</strain>
    </source>
</reference>
<dbReference type="EC" id="3.2.2.-" evidence="1"/>
<dbReference type="EC" id="4.2.99.18" evidence="1"/>
<dbReference type="EMBL" id="CP001657">
    <property type="protein sequence ID" value="ACT12278.1"/>
    <property type="molecule type" value="Genomic_DNA"/>
</dbReference>
<dbReference type="RefSeq" id="WP_015839510.1">
    <property type="nucleotide sequence ID" value="NC_012917.1"/>
</dbReference>
<dbReference type="SMR" id="C6DCC8"/>
<dbReference type="STRING" id="561230.PC1_1230"/>
<dbReference type="KEGG" id="pct:PC1_1230"/>
<dbReference type="eggNOG" id="COG0266">
    <property type="taxonomic scope" value="Bacteria"/>
</dbReference>
<dbReference type="HOGENOM" id="CLU_038423_2_2_6"/>
<dbReference type="OrthoDB" id="5657047at2"/>
<dbReference type="Proteomes" id="UP000002736">
    <property type="component" value="Chromosome"/>
</dbReference>
<dbReference type="GO" id="GO:0140078">
    <property type="term" value="F:class I DNA-(apurinic or apyrimidinic site) endonuclease activity"/>
    <property type="evidence" value="ECO:0007669"/>
    <property type="project" value="UniProtKB-EC"/>
</dbReference>
<dbReference type="GO" id="GO:0003684">
    <property type="term" value="F:damaged DNA binding"/>
    <property type="evidence" value="ECO:0007669"/>
    <property type="project" value="InterPro"/>
</dbReference>
<dbReference type="GO" id="GO:0000703">
    <property type="term" value="F:oxidized pyrimidine nucleobase lesion DNA N-glycosylase activity"/>
    <property type="evidence" value="ECO:0007669"/>
    <property type="project" value="UniProtKB-UniRule"/>
</dbReference>
<dbReference type="GO" id="GO:0008270">
    <property type="term" value="F:zinc ion binding"/>
    <property type="evidence" value="ECO:0007669"/>
    <property type="project" value="UniProtKB-UniRule"/>
</dbReference>
<dbReference type="GO" id="GO:0006284">
    <property type="term" value="P:base-excision repair"/>
    <property type="evidence" value="ECO:0007669"/>
    <property type="project" value="InterPro"/>
</dbReference>
<dbReference type="FunFam" id="1.10.8.50:FF:000005">
    <property type="entry name" value="Endonuclease 8"/>
    <property type="match status" value="1"/>
</dbReference>
<dbReference type="FunFam" id="3.20.190.10:FF:000002">
    <property type="entry name" value="Endonuclease 8"/>
    <property type="match status" value="1"/>
</dbReference>
<dbReference type="Gene3D" id="1.10.8.50">
    <property type="match status" value="1"/>
</dbReference>
<dbReference type="Gene3D" id="3.20.190.10">
    <property type="entry name" value="MutM-like, N-terminal"/>
    <property type="match status" value="1"/>
</dbReference>
<dbReference type="HAMAP" id="MF_01253">
    <property type="entry name" value="Endonuclease_8"/>
    <property type="match status" value="1"/>
</dbReference>
<dbReference type="InterPro" id="IPR015886">
    <property type="entry name" value="DNA_glyclase/AP_lyase_DNA-bd"/>
</dbReference>
<dbReference type="InterPro" id="IPR015887">
    <property type="entry name" value="DNA_glyclase_Znf_dom_DNA_BS"/>
</dbReference>
<dbReference type="InterPro" id="IPR023713">
    <property type="entry name" value="Endonuclease-VIII"/>
</dbReference>
<dbReference type="InterPro" id="IPR012319">
    <property type="entry name" value="FPG_cat"/>
</dbReference>
<dbReference type="InterPro" id="IPR035937">
    <property type="entry name" value="MutM-like_N-ter"/>
</dbReference>
<dbReference type="InterPro" id="IPR010979">
    <property type="entry name" value="Ribosomal_uS13-like_H2TH"/>
</dbReference>
<dbReference type="InterPro" id="IPR000214">
    <property type="entry name" value="Znf_DNA_glyclase/AP_lyase"/>
</dbReference>
<dbReference type="InterPro" id="IPR010663">
    <property type="entry name" value="Znf_FPG/IleRS"/>
</dbReference>
<dbReference type="NCBIfam" id="NF007763">
    <property type="entry name" value="PRK10445.1"/>
    <property type="match status" value="1"/>
</dbReference>
<dbReference type="PANTHER" id="PTHR42697">
    <property type="entry name" value="ENDONUCLEASE 8"/>
    <property type="match status" value="1"/>
</dbReference>
<dbReference type="PANTHER" id="PTHR42697:SF1">
    <property type="entry name" value="ENDONUCLEASE 8"/>
    <property type="match status" value="1"/>
</dbReference>
<dbReference type="Pfam" id="PF01149">
    <property type="entry name" value="Fapy_DNA_glyco"/>
    <property type="match status" value="1"/>
</dbReference>
<dbReference type="Pfam" id="PF06831">
    <property type="entry name" value="H2TH"/>
    <property type="match status" value="1"/>
</dbReference>
<dbReference type="Pfam" id="PF06827">
    <property type="entry name" value="zf-FPG_IleRS"/>
    <property type="match status" value="1"/>
</dbReference>
<dbReference type="SMART" id="SM00898">
    <property type="entry name" value="Fapy_DNA_glyco"/>
    <property type="match status" value="1"/>
</dbReference>
<dbReference type="SMART" id="SM01232">
    <property type="entry name" value="H2TH"/>
    <property type="match status" value="1"/>
</dbReference>
<dbReference type="SUPFAM" id="SSF57716">
    <property type="entry name" value="Glucocorticoid receptor-like (DNA-binding domain)"/>
    <property type="match status" value="1"/>
</dbReference>
<dbReference type="SUPFAM" id="SSF81624">
    <property type="entry name" value="N-terminal domain of MutM-like DNA repair proteins"/>
    <property type="match status" value="1"/>
</dbReference>
<dbReference type="SUPFAM" id="SSF46946">
    <property type="entry name" value="S13-like H2TH domain"/>
    <property type="match status" value="1"/>
</dbReference>
<dbReference type="PROSITE" id="PS51068">
    <property type="entry name" value="FPG_CAT"/>
    <property type="match status" value="1"/>
</dbReference>
<dbReference type="PROSITE" id="PS01242">
    <property type="entry name" value="ZF_FPG_1"/>
    <property type="match status" value="1"/>
</dbReference>
<dbReference type="PROSITE" id="PS51066">
    <property type="entry name" value="ZF_FPG_2"/>
    <property type="match status" value="1"/>
</dbReference>
<evidence type="ECO:0000255" key="1">
    <source>
        <dbReference type="HAMAP-Rule" id="MF_01253"/>
    </source>
</evidence>
<sequence length="263" mass="30272">MPEGPEIRRAADKLVEAVVGKTLTRVWFAFPELKPYEAELVGQQVRQIATRGKALLTYFSNDRVLYSHNQLYGVWRVVNAGESPETKRDLRVRLETQNRAILLYSASDIEMLTPEALTTHPFLQRIGPDVLDLSLTPEQVYERLLLPRFRRRQFSGLLLDQAFLAGLGNYLRVEILWQAQLAPQHTAAQLNEEQLQTLSQALLEIPRLSYNTRGTVDENHHHGAIFSFKVFHRDGESCERCGGIIERTMLSSRPFYWCPHCQR</sequence>
<name>END8_PECCP</name>
<organism>
    <name type="scientific">Pectobacterium carotovorum subsp. carotovorum (strain PC1)</name>
    <dbReference type="NCBI Taxonomy" id="561230"/>
    <lineage>
        <taxon>Bacteria</taxon>
        <taxon>Pseudomonadati</taxon>
        <taxon>Pseudomonadota</taxon>
        <taxon>Gammaproteobacteria</taxon>
        <taxon>Enterobacterales</taxon>
        <taxon>Pectobacteriaceae</taxon>
        <taxon>Pectobacterium</taxon>
    </lineage>
</organism>
<gene>
    <name evidence="1" type="primary">nei</name>
    <name type="ordered locus">PC1_1230</name>
</gene>
<proteinExistence type="inferred from homology"/>
<keyword id="KW-0227">DNA damage</keyword>
<keyword id="KW-0234">DNA repair</keyword>
<keyword id="KW-0238">DNA-binding</keyword>
<keyword id="KW-0326">Glycosidase</keyword>
<keyword id="KW-0378">Hydrolase</keyword>
<keyword id="KW-0456">Lyase</keyword>
<keyword id="KW-0479">Metal-binding</keyword>
<keyword id="KW-0511">Multifunctional enzyme</keyword>
<keyword id="KW-0862">Zinc</keyword>
<keyword id="KW-0863">Zinc-finger</keyword>
<feature type="initiator methionine" description="Removed" evidence="1">
    <location>
        <position position="1"/>
    </location>
</feature>
<feature type="chain" id="PRO_1000214116" description="Endonuclease 8">
    <location>
        <begin position="2"/>
        <end position="263"/>
    </location>
</feature>
<feature type="zinc finger region" description="FPG-type" evidence="1">
    <location>
        <begin position="229"/>
        <end position="263"/>
    </location>
</feature>
<feature type="active site" description="Schiff-base intermediate with DNA" evidence="1">
    <location>
        <position position="2"/>
    </location>
</feature>
<feature type="active site" description="Proton donor" evidence="1">
    <location>
        <position position="3"/>
    </location>
</feature>
<feature type="active site" description="Proton donor; for beta-elimination activity" evidence="1">
    <location>
        <position position="53"/>
    </location>
</feature>
<feature type="active site" description="Proton donor; for delta-elimination activity" evidence="1">
    <location>
        <position position="253"/>
    </location>
</feature>
<feature type="binding site" evidence="1">
    <location>
        <position position="70"/>
    </location>
    <ligand>
        <name>DNA</name>
        <dbReference type="ChEBI" id="CHEBI:16991"/>
    </ligand>
</feature>
<feature type="binding site" evidence="1">
    <location>
        <position position="125"/>
    </location>
    <ligand>
        <name>DNA</name>
        <dbReference type="ChEBI" id="CHEBI:16991"/>
    </ligand>
</feature>
<feature type="binding site" evidence="1">
    <location>
        <position position="169"/>
    </location>
    <ligand>
        <name>DNA</name>
        <dbReference type="ChEBI" id="CHEBI:16991"/>
    </ligand>
</feature>
<comment type="function">
    <text evidence="1">Involved in base excision repair of DNA damaged by oxidation or by mutagenic agents. Acts as a DNA glycosylase that recognizes and removes damaged bases. Has a preference for oxidized pyrimidines, such as thymine glycol, 5,6-dihydrouracil and 5,6-dihydrothymine. Has AP (apurinic/apyrimidinic) lyase activity and introduces nicks in the DNA strand. Cleaves the DNA backbone by beta-delta elimination to generate a single-strand break at the site of the removed base with both 3'- and 5'-phosphates.</text>
</comment>
<comment type="catalytic activity">
    <reaction evidence="1">
        <text>2'-deoxyribonucleotide-(2'-deoxyribose 5'-phosphate)-2'-deoxyribonucleotide-DNA = a 3'-end 2'-deoxyribonucleotide-(2,3-dehydro-2,3-deoxyribose 5'-phosphate)-DNA + a 5'-end 5'-phospho-2'-deoxyribonucleoside-DNA + H(+)</text>
        <dbReference type="Rhea" id="RHEA:66592"/>
        <dbReference type="Rhea" id="RHEA-COMP:13180"/>
        <dbReference type="Rhea" id="RHEA-COMP:16897"/>
        <dbReference type="Rhea" id="RHEA-COMP:17067"/>
        <dbReference type="ChEBI" id="CHEBI:15378"/>
        <dbReference type="ChEBI" id="CHEBI:136412"/>
        <dbReference type="ChEBI" id="CHEBI:157695"/>
        <dbReference type="ChEBI" id="CHEBI:167181"/>
        <dbReference type="EC" id="4.2.99.18"/>
    </reaction>
</comment>
<comment type="cofactor">
    <cofactor evidence="1">
        <name>Zn(2+)</name>
        <dbReference type="ChEBI" id="CHEBI:29105"/>
    </cofactor>
    <text evidence="1">Binds 1 zinc ion per subunit.</text>
</comment>
<comment type="similarity">
    <text evidence="1">Belongs to the FPG family.</text>
</comment>
<protein>
    <recommendedName>
        <fullName evidence="1">Endonuclease 8</fullName>
    </recommendedName>
    <alternativeName>
        <fullName evidence="1">DNA glycosylase/AP lyase Nei</fullName>
        <ecNumber evidence="1">3.2.2.-</ecNumber>
        <ecNumber evidence="1">4.2.99.18</ecNumber>
    </alternativeName>
    <alternativeName>
        <fullName evidence="1">DNA-(apurinic or apyrimidinic site) lyase Nei</fullName>
    </alternativeName>
    <alternativeName>
        <fullName evidence="1">Endonuclease VIII</fullName>
    </alternativeName>
</protein>